<protein>
    <recommendedName>
        <fullName>RNA-binding protein with serine-rich domain 1</fullName>
    </recommendedName>
</protein>
<reference key="1">
    <citation type="journal article" date="2005" name="Science">
        <title>The transcriptional landscape of the mammalian genome.</title>
        <authorList>
            <person name="Carninci P."/>
            <person name="Kasukawa T."/>
            <person name="Katayama S."/>
            <person name="Gough J."/>
            <person name="Frith M.C."/>
            <person name="Maeda N."/>
            <person name="Oyama R."/>
            <person name="Ravasi T."/>
            <person name="Lenhard B."/>
            <person name="Wells C."/>
            <person name="Kodzius R."/>
            <person name="Shimokawa K."/>
            <person name="Bajic V.B."/>
            <person name="Brenner S.E."/>
            <person name="Batalov S."/>
            <person name="Forrest A.R."/>
            <person name="Zavolan M."/>
            <person name="Davis M.J."/>
            <person name="Wilming L.G."/>
            <person name="Aidinis V."/>
            <person name="Allen J.E."/>
            <person name="Ambesi-Impiombato A."/>
            <person name="Apweiler R."/>
            <person name="Aturaliya R.N."/>
            <person name="Bailey T.L."/>
            <person name="Bansal M."/>
            <person name="Baxter L."/>
            <person name="Beisel K.W."/>
            <person name="Bersano T."/>
            <person name="Bono H."/>
            <person name="Chalk A.M."/>
            <person name="Chiu K.P."/>
            <person name="Choudhary V."/>
            <person name="Christoffels A."/>
            <person name="Clutterbuck D.R."/>
            <person name="Crowe M.L."/>
            <person name="Dalla E."/>
            <person name="Dalrymple B.P."/>
            <person name="de Bono B."/>
            <person name="Della Gatta G."/>
            <person name="di Bernardo D."/>
            <person name="Down T."/>
            <person name="Engstrom P."/>
            <person name="Fagiolini M."/>
            <person name="Faulkner G."/>
            <person name="Fletcher C.F."/>
            <person name="Fukushima T."/>
            <person name="Furuno M."/>
            <person name="Futaki S."/>
            <person name="Gariboldi M."/>
            <person name="Georgii-Hemming P."/>
            <person name="Gingeras T.R."/>
            <person name="Gojobori T."/>
            <person name="Green R.E."/>
            <person name="Gustincich S."/>
            <person name="Harbers M."/>
            <person name="Hayashi Y."/>
            <person name="Hensch T.K."/>
            <person name="Hirokawa N."/>
            <person name="Hill D."/>
            <person name="Huminiecki L."/>
            <person name="Iacono M."/>
            <person name="Ikeo K."/>
            <person name="Iwama A."/>
            <person name="Ishikawa T."/>
            <person name="Jakt M."/>
            <person name="Kanapin A."/>
            <person name="Katoh M."/>
            <person name="Kawasawa Y."/>
            <person name="Kelso J."/>
            <person name="Kitamura H."/>
            <person name="Kitano H."/>
            <person name="Kollias G."/>
            <person name="Krishnan S.P."/>
            <person name="Kruger A."/>
            <person name="Kummerfeld S.K."/>
            <person name="Kurochkin I.V."/>
            <person name="Lareau L.F."/>
            <person name="Lazarevic D."/>
            <person name="Lipovich L."/>
            <person name="Liu J."/>
            <person name="Liuni S."/>
            <person name="McWilliam S."/>
            <person name="Madan Babu M."/>
            <person name="Madera M."/>
            <person name="Marchionni L."/>
            <person name="Matsuda H."/>
            <person name="Matsuzawa S."/>
            <person name="Miki H."/>
            <person name="Mignone F."/>
            <person name="Miyake S."/>
            <person name="Morris K."/>
            <person name="Mottagui-Tabar S."/>
            <person name="Mulder N."/>
            <person name="Nakano N."/>
            <person name="Nakauchi H."/>
            <person name="Ng P."/>
            <person name="Nilsson R."/>
            <person name="Nishiguchi S."/>
            <person name="Nishikawa S."/>
            <person name="Nori F."/>
            <person name="Ohara O."/>
            <person name="Okazaki Y."/>
            <person name="Orlando V."/>
            <person name="Pang K.C."/>
            <person name="Pavan W.J."/>
            <person name="Pavesi G."/>
            <person name="Pesole G."/>
            <person name="Petrovsky N."/>
            <person name="Piazza S."/>
            <person name="Reed J."/>
            <person name="Reid J.F."/>
            <person name="Ring B.Z."/>
            <person name="Ringwald M."/>
            <person name="Rost B."/>
            <person name="Ruan Y."/>
            <person name="Salzberg S.L."/>
            <person name="Sandelin A."/>
            <person name="Schneider C."/>
            <person name="Schoenbach C."/>
            <person name="Sekiguchi K."/>
            <person name="Semple C.A."/>
            <person name="Seno S."/>
            <person name="Sessa L."/>
            <person name="Sheng Y."/>
            <person name="Shibata Y."/>
            <person name="Shimada H."/>
            <person name="Shimada K."/>
            <person name="Silva D."/>
            <person name="Sinclair B."/>
            <person name="Sperling S."/>
            <person name="Stupka E."/>
            <person name="Sugiura K."/>
            <person name="Sultana R."/>
            <person name="Takenaka Y."/>
            <person name="Taki K."/>
            <person name="Tammoja K."/>
            <person name="Tan S.L."/>
            <person name="Tang S."/>
            <person name="Taylor M.S."/>
            <person name="Tegner J."/>
            <person name="Teichmann S.A."/>
            <person name="Ueda H.R."/>
            <person name="van Nimwegen E."/>
            <person name="Verardo R."/>
            <person name="Wei C.L."/>
            <person name="Yagi K."/>
            <person name="Yamanishi H."/>
            <person name="Zabarovsky E."/>
            <person name="Zhu S."/>
            <person name="Zimmer A."/>
            <person name="Hide W."/>
            <person name="Bult C."/>
            <person name="Grimmond S.M."/>
            <person name="Teasdale R.D."/>
            <person name="Liu E.T."/>
            <person name="Brusic V."/>
            <person name="Quackenbush J."/>
            <person name="Wahlestedt C."/>
            <person name="Mattick J.S."/>
            <person name="Hume D.A."/>
            <person name="Kai C."/>
            <person name="Sasaki D."/>
            <person name="Tomaru Y."/>
            <person name="Fukuda S."/>
            <person name="Kanamori-Katayama M."/>
            <person name="Suzuki M."/>
            <person name="Aoki J."/>
            <person name="Arakawa T."/>
            <person name="Iida J."/>
            <person name="Imamura K."/>
            <person name="Itoh M."/>
            <person name="Kato T."/>
            <person name="Kawaji H."/>
            <person name="Kawagashira N."/>
            <person name="Kawashima T."/>
            <person name="Kojima M."/>
            <person name="Kondo S."/>
            <person name="Konno H."/>
            <person name="Nakano K."/>
            <person name="Ninomiya N."/>
            <person name="Nishio T."/>
            <person name="Okada M."/>
            <person name="Plessy C."/>
            <person name="Shibata K."/>
            <person name="Shiraki T."/>
            <person name="Suzuki S."/>
            <person name="Tagami M."/>
            <person name="Waki K."/>
            <person name="Watahiki A."/>
            <person name="Okamura-Oho Y."/>
            <person name="Suzuki H."/>
            <person name="Kawai J."/>
            <person name="Hayashizaki Y."/>
        </authorList>
    </citation>
    <scope>NUCLEOTIDE SEQUENCE [LARGE SCALE MRNA] (ISOFORMS 1 AND 2)</scope>
    <source>
        <strain>C57BL/6J</strain>
        <strain>DBA/2J</strain>
        <tissue>Bone marrow</tissue>
        <tissue>Lung</tissue>
    </source>
</reference>
<reference key="2">
    <citation type="journal article" date="2004" name="Genome Res.">
        <title>The status, quality, and expansion of the NIH full-length cDNA project: the Mammalian Gene Collection (MGC).</title>
        <authorList>
            <consortium name="The MGC Project Team"/>
        </authorList>
    </citation>
    <scope>NUCLEOTIDE SEQUENCE [LARGE SCALE MRNA] (ISOFORM 1)</scope>
    <source>
        <strain>C57BL/6J</strain>
        <strain>Czech II</strain>
        <strain>FVB/N</strain>
        <tissue>Mammary tumor</tissue>
    </source>
</reference>
<reference key="3">
    <citation type="journal article" date="2010" name="Cell">
        <title>A tissue-specific atlas of mouse protein phosphorylation and expression.</title>
        <authorList>
            <person name="Huttlin E.L."/>
            <person name="Jedrychowski M.P."/>
            <person name="Elias J.E."/>
            <person name="Goswami T."/>
            <person name="Rad R."/>
            <person name="Beausoleil S.A."/>
            <person name="Villen J."/>
            <person name="Haas W."/>
            <person name="Sowa M.E."/>
            <person name="Gygi S.P."/>
        </authorList>
    </citation>
    <scope>IDENTIFICATION BY MASS SPECTROMETRY [LARGE SCALE ANALYSIS]</scope>
    <source>
        <tissue>Spleen</tissue>
    </source>
</reference>
<reference key="4">
    <citation type="journal article" date="2013" name="Mol. Cell">
        <title>SIRT5-mediated lysine desuccinylation impacts diverse metabolic pathways.</title>
        <authorList>
            <person name="Park J."/>
            <person name="Chen Y."/>
            <person name="Tishkoff D.X."/>
            <person name="Peng C."/>
            <person name="Tan M."/>
            <person name="Dai L."/>
            <person name="Xie Z."/>
            <person name="Zhang Y."/>
            <person name="Zwaans B.M."/>
            <person name="Skinner M.E."/>
            <person name="Lombard D.B."/>
            <person name="Zhao Y."/>
        </authorList>
    </citation>
    <scope>ACETYLATION [LARGE SCALE ANALYSIS] AT LYS-218</scope>
    <scope>IDENTIFICATION BY MASS SPECTROMETRY [LARGE SCALE ANALYSIS]</scope>
    <source>
        <tissue>Embryonic fibroblast</tissue>
    </source>
</reference>
<sequence length="305" mass="34208">MDLSGVKKKSLLGVKENNKKSSTRAPSPTKRKDRSDEKSKDRSKDKGATKESSEKDRGRDKTRKRRSASSGSSSTRSRSSSTSSSGSSTSTGSSSGSSSSSASSRSGSSSTSRSSSSSSSSGSPSPSRRRHDNRRRSRSKSKPPKRDEKERKRRSPSPKPTKVHIGRLTRNVTKDHIMEIFSTYGKIKMIDMPVERMHPHLSKGYAYVEFENPDEAEKALKHMDGGQIDGQEITATAVLAPWPRPPPRRFSPPRRMLPPPPMWRRSPPRMRRRSRSPRRRSPVRRRSRSPGRRRHRSRSSSNSSR</sequence>
<name>RNPS1_MOUSE</name>
<gene>
    <name type="primary">Rnps1</name>
</gene>
<dbReference type="EMBL" id="AK146443">
    <property type="protein sequence ID" value="BAE27176.1"/>
    <property type="molecule type" value="mRNA"/>
</dbReference>
<dbReference type="EMBL" id="AK151150">
    <property type="protein sequence ID" value="BAE30156.1"/>
    <property type="molecule type" value="mRNA"/>
</dbReference>
<dbReference type="EMBL" id="AK165905">
    <property type="protein sequence ID" value="BAE38451.1"/>
    <property type="molecule type" value="mRNA"/>
</dbReference>
<dbReference type="EMBL" id="BC002061">
    <property type="protein sequence ID" value="AAH02061.1"/>
    <property type="molecule type" value="mRNA"/>
</dbReference>
<dbReference type="EMBL" id="BC008089">
    <property type="protein sequence ID" value="AAH08089.1"/>
    <property type="molecule type" value="mRNA"/>
</dbReference>
<dbReference type="CCDS" id="CCDS37487.1">
    <molecule id="Q99M28-2"/>
</dbReference>
<dbReference type="CCDS" id="CCDS37488.1">
    <molecule id="Q99M28-1"/>
</dbReference>
<dbReference type="RefSeq" id="NP_001073596.1">
    <molecule id="Q99M28-1"/>
    <property type="nucleotide sequence ID" value="NM_001080127.1"/>
</dbReference>
<dbReference type="RefSeq" id="NP_001073597.1">
    <molecule id="Q99M28-2"/>
    <property type="nucleotide sequence ID" value="NM_001080128.1"/>
</dbReference>
<dbReference type="RefSeq" id="NP_001344555.1">
    <molecule id="Q99M28-1"/>
    <property type="nucleotide sequence ID" value="NM_001357626.1"/>
</dbReference>
<dbReference type="RefSeq" id="NP_033096.2">
    <molecule id="Q99M28-1"/>
    <property type="nucleotide sequence ID" value="NM_009070.2"/>
</dbReference>
<dbReference type="RefSeq" id="XP_017172851.1">
    <property type="nucleotide sequence ID" value="XM_017317362.1"/>
</dbReference>
<dbReference type="SMR" id="Q99M28"/>
<dbReference type="BioGRID" id="202923">
    <property type="interactions" value="16"/>
</dbReference>
<dbReference type="FunCoup" id="Q99M28">
    <property type="interactions" value="3913"/>
</dbReference>
<dbReference type="IntAct" id="Q99M28">
    <property type="interactions" value="9"/>
</dbReference>
<dbReference type="MINT" id="Q99M28"/>
<dbReference type="STRING" id="10090.ENSMUSP00000126345"/>
<dbReference type="GlyGen" id="Q99M28">
    <property type="glycosylation" value="1 site, 1 N-linked glycan (1 site)"/>
</dbReference>
<dbReference type="iPTMnet" id="Q99M28"/>
<dbReference type="PhosphoSitePlus" id="Q99M28"/>
<dbReference type="jPOST" id="Q99M28"/>
<dbReference type="PaxDb" id="10090-ENSMUSP00000126345"/>
<dbReference type="ProteomicsDB" id="260992">
    <molecule id="Q99M28-1"/>
</dbReference>
<dbReference type="ProteomicsDB" id="260993">
    <molecule id="Q99M28-2"/>
</dbReference>
<dbReference type="Pumba" id="Q99M28"/>
<dbReference type="Antibodypedia" id="23681">
    <property type="antibodies" value="72 antibodies from 20 providers"/>
</dbReference>
<dbReference type="DNASU" id="19826"/>
<dbReference type="Ensembl" id="ENSMUST00000088512.13">
    <molecule id="Q99M28-1"/>
    <property type="protein sequence ID" value="ENSMUSP00000085867.6"/>
    <property type="gene ID" value="ENSMUSG00000034681.18"/>
</dbReference>
<dbReference type="Ensembl" id="ENSMUST00000115371.9">
    <molecule id="Q99M28-2"/>
    <property type="protein sequence ID" value="ENSMUSP00000111028.2"/>
    <property type="gene ID" value="ENSMUSG00000034681.18"/>
</dbReference>
<dbReference type="Ensembl" id="ENSMUST00000163717.2">
    <molecule id="Q99M28-1"/>
    <property type="protein sequence ID" value="ENSMUSP00000126345.2"/>
    <property type="gene ID" value="ENSMUSG00000034681.18"/>
</dbReference>
<dbReference type="GeneID" id="19826"/>
<dbReference type="KEGG" id="mmu:19826"/>
<dbReference type="UCSC" id="uc008avs.1">
    <molecule id="Q99M28-1"/>
    <property type="organism name" value="mouse"/>
</dbReference>
<dbReference type="UCSC" id="uc008avu.1">
    <molecule id="Q99M28-2"/>
    <property type="organism name" value="mouse"/>
</dbReference>
<dbReference type="AGR" id="MGI:97960"/>
<dbReference type="CTD" id="10921"/>
<dbReference type="MGI" id="MGI:97960">
    <property type="gene designation" value="Rnps1"/>
</dbReference>
<dbReference type="VEuPathDB" id="HostDB:ENSMUSG00000034681"/>
<dbReference type="eggNOG" id="KOG4209">
    <property type="taxonomic scope" value="Eukaryota"/>
</dbReference>
<dbReference type="GeneTree" id="ENSGT00730000111029"/>
<dbReference type="HOGENOM" id="CLU_076438_0_0_1"/>
<dbReference type="InParanoid" id="Q99M28"/>
<dbReference type="OMA" id="EFPVDRY"/>
<dbReference type="OrthoDB" id="92302at9989"/>
<dbReference type="PhylomeDB" id="Q99M28"/>
<dbReference type="TreeFam" id="TF314165"/>
<dbReference type="Reactome" id="R-MMU-159236">
    <property type="pathway name" value="Transport of Mature mRNA derived from an Intron-Containing Transcript"/>
</dbReference>
<dbReference type="Reactome" id="R-MMU-72163">
    <property type="pathway name" value="mRNA Splicing - Major Pathway"/>
</dbReference>
<dbReference type="Reactome" id="R-MMU-72187">
    <property type="pathway name" value="mRNA 3'-end processing"/>
</dbReference>
<dbReference type="Reactome" id="R-MMU-73856">
    <property type="pathway name" value="RNA Polymerase II Transcription Termination"/>
</dbReference>
<dbReference type="Reactome" id="R-MMU-975957">
    <property type="pathway name" value="Nonsense Mediated Decay (NMD) enhanced by the Exon Junction Complex (EJC)"/>
</dbReference>
<dbReference type="BioGRID-ORCS" id="19826">
    <property type="hits" value="17 hits in 81 CRISPR screens"/>
</dbReference>
<dbReference type="ChiTaRS" id="Rnps1">
    <property type="organism name" value="mouse"/>
</dbReference>
<dbReference type="PRO" id="PR:Q99M28"/>
<dbReference type="Proteomes" id="UP000000589">
    <property type="component" value="Chromosome 17"/>
</dbReference>
<dbReference type="RNAct" id="Q99M28">
    <property type="molecule type" value="protein"/>
</dbReference>
<dbReference type="Bgee" id="ENSMUSG00000034681">
    <property type="expression patterns" value="Expressed in embryonic post-anal tail and 234 other cell types or tissues"/>
</dbReference>
<dbReference type="GO" id="GO:0061574">
    <property type="term" value="C:ASAP complex"/>
    <property type="evidence" value="ECO:0000250"/>
    <property type="project" value="UniProtKB"/>
</dbReference>
<dbReference type="GO" id="GO:0005737">
    <property type="term" value="C:cytoplasm"/>
    <property type="evidence" value="ECO:0007669"/>
    <property type="project" value="UniProtKB-SubCell"/>
</dbReference>
<dbReference type="GO" id="GO:0016607">
    <property type="term" value="C:nuclear speck"/>
    <property type="evidence" value="ECO:0007669"/>
    <property type="project" value="UniProtKB-SubCell"/>
</dbReference>
<dbReference type="GO" id="GO:0003730">
    <property type="term" value="F:mRNA 3'-UTR binding"/>
    <property type="evidence" value="ECO:0007669"/>
    <property type="project" value="Ensembl"/>
</dbReference>
<dbReference type="GO" id="GO:0006397">
    <property type="term" value="P:mRNA processing"/>
    <property type="evidence" value="ECO:0007669"/>
    <property type="project" value="UniProtKB-KW"/>
</dbReference>
<dbReference type="GO" id="GO:0048025">
    <property type="term" value="P:negative regulation of mRNA splicing, via spliceosome"/>
    <property type="evidence" value="ECO:0000250"/>
    <property type="project" value="UniProtKB"/>
</dbReference>
<dbReference type="GO" id="GO:0000184">
    <property type="term" value="P:nuclear-transcribed mRNA catabolic process, nonsense-mediated decay"/>
    <property type="evidence" value="ECO:0007669"/>
    <property type="project" value="UniProtKB-KW"/>
</dbReference>
<dbReference type="GO" id="GO:0043065">
    <property type="term" value="P:positive regulation of apoptotic process"/>
    <property type="evidence" value="ECO:0000250"/>
    <property type="project" value="UniProtKB"/>
</dbReference>
<dbReference type="GO" id="GO:0000381">
    <property type="term" value="P:regulation of alternative mRNA splicing, via spliceosome"/>
    <property type="evidence" value="ECO:0000250"/>
    <property type="project" value="UniProtKB"/>
</dbReference>
<dbReference type="GO" id="GO:0008380">
    <property type="term" value="P:RNA splicing"/>
    <property type="evidence" value="ECO:0007669"/>
    <property type="project" value="UniProtKB-KW"/>
</dbReference>
<dbReference type="CDD" id="cd12365">
    <property type="entry name" value="RRM_RNPS1"/>
    <property type="match status" value="1"/>
</dbReference>
<dbReference type="Gene3D" id="3.30.70.330">
    <property type="match status" value="1"/>
</dbReference>
<dbReference type="InterPro" id="IPR012677">
    <property type="entry name" value="Nucleotide-bd_a/b_plait_sf"/>
</dbReference>
<dbReference type="InterPro" id="IPR035979">
    <property type="entry name" value="RBD_domain_sf"/>
</dbReference>
<dbReference type="InterPro" id="IPR034201">
    <property type="entry name" value="RNPS1_RRM"/>
</dbReference>
<dbReference type="InterPro" id="IPR000504">
    <property type="entry name" value="RRM_dom"/>
</dbReference>
<dbReference type="PANTHER" id="PTHR15481">
    <property type="entry name" value="RIBONUCLEIC ACID BINDING PROTEIN S1"/>
    <property type="match status" value="1"/>
</dbReference>
<dbReference type="PANTHER" id="PTHR15481:SF2">
    <property type="entry name" value="RNA-BINDING PROTEIN WITH SERINE-RICH DOMAIN 1"/>
    <property type="match status" value="1"/>
</dbReference>
<dbReference type="Pfam" id="PF00076">
    <property type="entry name" value="RRM_1"/>
    <property type="match status" value="1"/>
</dbReference>
<dbReference type="SMART" id="SM00360">
    <property type="entry name" value="RRM"/>
    <property type="match status" value="1"/>
</dbReference>
<dbReference type="SUPFAM" id="SSF54928">
    <property type="entry name" value="RNA-binding domain, RBD"/>
    <property type="match status" value="1"/>
</dbReference>
<dbReference type="PROSITE" id="PS50102">
    <property type="entry name" value="RRM"/>
    <property type="match status" value="1"/>
</dbReference>
<proteinExistence type="evidence at protein level"/>
<feature type="chain" id="PRO_0000081817" description="RNA-binding protein with serine-rich domain 1">
    <location>
        <begin position="1"/>
        <end position="305"/>
    </location>
</feature>
<feature type="domain" description="RRM" evidence="3">
    <location>
        <begin position="161"/>
        <end position="240"/>
    </location>
</feature>
<feature type="region of interest" description="Necessary for interaction with the cleaved p110 isoform of CDC2L1" evidence="1">
    <location>
        <begin position="1"/>
        <end position="220"/>
    </location>
</feature>
<feature type="region of interest" description="Disordered" evidence="4">
    <location>
        <begin position="1"/>
        <end position="170"/>
    </location>
</feature>
<feature type="region of interest" description="Necessary for interaction with SRP54, nuclear localization and exon-skipping" evidence="1">
    <location>
        <begin position="1"/>
        <end position="161"/>
    </location>
</feature>
<feature type="region of interest" description="Necessary for interactions with UPF2 and UPF3B and UPF2-dependent NMD" evidence="1">
    <location>
        <begin position="69"/>
        <end position="121"/>
    </location>
</feature>
<feature type="region of interest" description="Necessary for interaction with PNN and exon-skipping" evidence="1">
    <location>
        <begin position="156"/>
        <end position="242"/>
    </location>
</feature>
<feature type="region of interest" description="Interaction with SAP18 and ACIN1" evidence="1">
    <location>
        <begin position="159"/>
        <end position="244"/>
    </location>
</feature>
<feature type="region of interest" description="Necessary for interaction with TRA2B, nuclear localization and exon-skipping" evidence="1">
    <location>
        <begin position="238"/>
        <end position="305"/>
    </location>
</feature>
<feature type="region of interest" description="Disordered" evidence="4">
    <location>
        <begin position="240"/>
        <end position="305"/>
    </location>
</feature>
<feature type="compositionally biased region" description="Basic residues" evidence="4">
    <location>
        <begin position="1"/>
        <end position="10"/>
    </location>
</feature>
<feature type="compositionally biased region" description="Basic and acidic residues" evidence="4">
    <location>
        <begin position="33"/>
        <end position="59"/>
    </location>
</feature>
<feature type="compositionally biased region" description="Low complexity" evidence="4">
    <location>
        <begin position="68"/>
        <end position="126"/>
    </location>
</feature>
<feature type="compositionally biased region" description="Basic residues" evidence="4">
    <location>
        <begin position="127"/>
        <end position="143"/>
    </location>
</feature>
<feature type="compositionally biased region" description="Basic residues" evidence="4">
    <location>
        <begin position="151"/>
        <end position="167"/>
    </location>
</feature>
<feature type="compositionally biased region" description="Pro residues" evidence="4">
    <location>
        <begin position="242"/>
        <end position="262"/>
    </location>
</feature>
<feature type="compositionally biased region" description="Basic residues" evidence="4">
    <location>
        <begin position="266"/>
        <end position="298"/>
    </location>
</feature>
<feature type="modified residue" description="Phosphoserine" evidence="2">
    <location>
        <position position="53"/>
    </location>
</feature>
<feature type="modified residue" description="Phosphoserine" evidence="2">
    <location>
        <position position="155"/>
    </location>
</feature>
<feature type="modified residue" description="Phosphoserine" evidence="2">
    <location>
        <position position="157"/>
    </location>
</feature>
<feature type="modified residue" description="Phosphothreonine" evidence="2">
    <location>
        <position position="161"/>
    </location>
</feature>
<feature type="modified residue" description="N6-acetyllysine" evidence="7">
    <location>
        <position position="218"/>
    </location>
</feature>
<feature type="cross-link" description="Glycyl lysine isopeptide (Lys-Gly) (interchain with G-Cter in SUMO2)" evidence="2">
    <location>
        <position position="7"/>
    </location>
</feature>
<feature type="cross-link" description="Glycyl lysine isopeptide (Lys-Gly) (interchain with G-Cter in SUMO2)" evidence="2">
    <location>
        <position position="15"/>
    </location>
</feature>
<feature type="splice variant" id="VSP_016244" description="In isoform 2." evidence="5">
    <location>
        <begin position="2"/>
        <end position="24"/>
    </location>
</feature>
<evidence type="ECO:0000250" key="1"/>
<evidence type="ECO:0000250" key="2">
    <source>
        <dbReference type="UniProtKB" id="Q15287"/>
    </source>
</evidence>
<evidence type="ECO:0000255" key="3">
    <source>
        <dbReference type="PROSITE-ProRule" id="PRU00176"/>
    </source>
</evidence>
<evidence type="ECO:0000256" key="4">
    <source>
        <dbReference type="SAM" id="MobiDB-lite"/>
    </source>
</evidence>
<evidence type="ECO:0000303" key="5">
    <source>
    </source>
</evidence>
<evidence type="ECO:0000305" key="6"/>
<evidence type="ECO:0007744" key="7">
    <source>
    </source>
</evidence>
<keyword id="KW-0007">Acetylation</keyword>
<keyword id="KW-0025">Alternative splicing</keyword>
<keyword id="KW-0963">Cytoplasm</keyword>
<keyword id="KW-1017">Isopeptide bond</keyword>
<keyword id="KW-0507">mRNA processing</keyword>
<keyword id="KW-0508">mRNA splicing</keyword>
<keyword id="KW-0866">Nonsense-mediated mRNA decay</keyword>
<keyword id="KW-0539">Nucleus</keyword>
<keyword id="KW-0597">Phosphoprotein</keyword>
<keyword id="KW-1185">Reference proteome</keyword>
<keyword id="KW-0694">RNA-binding</keyword>
<keyword id="KW-0832">Ubl conjugation</keyword>
<organism>
    <name type="scientific">Mus musculus</name>
    <name type="common">Mouse</name>
    <dbReference type="NCBI Taxonomy" id="10090"/>
    <lineage>
        <taxon>Eukaryota</taxon>
        <taxon>Metazoa</taxon>
        <taxon>Chordata</taxon>
        <taxon>Craniata</taxon>
        <taxon>Vertebrata</taxon>
        <taxon>Euteleostomi</taxon>
        <taxon>Mammalia</taxon>
        <taxon>Eutheria</taxon>
        <taxon>Euarchontoglires</taxon>
        <taxon>Glires</taxon>
        <taxon>Rodentia</taxon>
        <taxon>Myomorpha</taxon>
        <taxon>Muroidea</taxon>
        <taxon>Muridae</taxon>
        <taxon>Murinae</taxon>
        <taxon>Mus</taxon>
        <taxon>Mus</taxon>
    </lineage>
</organism>
<comment type="function">
    <text evidence="1">Part of pre- and post-splicing multiprotein mRNP complexes. Auxiliary component of the splicing-dependent multiprotein exon junction complex (EJC) deposited at splice junction on mRNAs. The EJC is a dynamic structure consisting of core proteins and several peripheral nuclear and cytoplasmic associated factors that join the complex only transiently either during EJC assembly or during subsequent mRNA metabolism. Component of the ASAP and PSAP complexes which bind RNA in a sequence-independent manner and are proposed to be recruited to the EJC prior to or during the splicing process and to regulate specific excision of introns in specific transcription subsets. The ASAP complex can inhibit RNA processing during in vitro splicing reactions. The ASAP complex promotes apoptosis and is disassembled after induction of apoptosis. Enhances the formation of the ATP-dependent A complex of the spliceosome. Involved in both constitutive splicing and, in association with SRP54 and TRA2B/SFRS10, in distinctive modulation of alternative splicing in a substrate-dependent manner. Involved in the splicing modulation of BCL2L1/Bcl-X (and probably other apoptotic genes); specifically inhibits formation of proapoptotic isoforms such as Bcl-X(S); the activity is different from the established EJC assembly and function. Participates in mRNA 3'-end cleavage. Involved in UPF2-dependent nonsense-mediated decay (NMD) of mRNAs containing premature stop codons. Also mediates increase of mRNA abundance and translational efficiency. Binds spliced mRNA 20-25 nt upstream of exon-exon junctions (By similarity).</text>
</comment>
<comment type="subunit">
    <text evidence="1">Found in mRNA splicing-dependent exon junction complexes (EJC). Found in a post-splicing complex with NXF1, RBM8A, UPF1, UPF2, UPF3A, UPF3B and RNPS1. Component of the heterotrimeric ASAP (apoptosis- and splicing-associated protein) and PSAP complexes consisting of RNPS1, SAP18 and either ACIN1 or PNN, respectively; the ASAP and PSAP complexes probably are formed mutually exclusive. Component of the active spliceosome. Associates with polysomes. Interacts with the cleaved p110 isoform of CDC2L1, CSNK2A1, PNN, SART3, SRP54, SRRM1 and TRA2B/SFRS10 (By similarity).</text>
</comment>
<comment type="subcellular location">
    <subcellularLocation>
        <location evidence="1">Nucleus</location>
    </subcellularLocation>
    <subcellularLocation>
        <location evidence="1">Nucleus speckle</location>
    </subcellularLocation>
    <subcellularLocation>
        <location evidence="1">Cytoplasm</location>
    </subcellularLocation>
    <text evidence="1">Nucleocytoplasmic shuttling protein. Colocalizes with the core EJC, ALYREF/THOC4, NXF1 and UAP56 in the nucleus and nuclear speckles (By similarity).</text>
</comment>
<comment type="alternative products">
    <event type="alternative splicing"/>
    <isoform>
        <id>Q99M28-1</id>
        <name>1</name>
        <sequence type="displayed"/>
    </isoform>
    <isoform>
        <id>Q99M28-2</id>
        <name>2</name>
        <sequence type="described" ref="VSP_016244"/>
    </isoform>
</comment>
<comment type="domain">
    <text evidence="1">The RRM domain is required for the formation of the ASAP complex.</text>
</comment>
<comment type="PTM">
    <text evidence="1">Phosphorylated on one or more of the four Ser/Thr residues (Ser-43, Thr-49, Ser-52 or Ser-53). Ser-53 phosphorylation site is important for splicing and translation stimulation activity in vitro (By similarity).</text>
</comment>
<comment type="similarity">
    <text evidence="6">Belongs to the splicing factor SR family.</text>
</comment>
<accession>Q99M28</accession>
<accession>Q3TMJ1</accession>
<accession>Q922H8</accession>